<feature type="chain" id="PRO_1000007098" description="Large ribosomal subunit protein bL12">
    <location>
        <begin position="1"/>
        <end position="121"/>
    </location>
</feature>
<dbReference type="EMBL" id="CP000408">
    <property type="protein sequence ID" value="ABP92155.1"/>
    <property type="molecule type" value="Genomic_DNA"/>
</dbReference>
<dbReference type="SMR" id="A4W1B6"/>
<dbReference type="KEGG" id="ssv:SSU98_0997"/>
<dbReference type="HOGENOM" id="CLU_086499_3_2_9"/>
<dbReference type="GO" id="GO:0022625">
    <property type="term" value="C:cytosolic large ribosomal subunit"/>
    <property type="evidence" value="ECO:0007669"/>
    <property type="project" value="TreeGrafter"/>
</dbReference>
<dbReference type="GO" id="GO:0003729">
    <property type="term" value="F:mRNA binding"/>
    <property type="evidence" value="ECO:0007669"/>
    <property type="project" value="TreeGrafter"/>
</dbReference>
<dbReference type="GO" id="GO:0003735">
    <property type="term" value="F:structural constituent of ribosome"/>
    <property type="evidence" value="ECO:0007669"/>
    <property type="project" value="InterPro"/>
</dbReference>
<dbReference type="GO" id="GO:0006412">
    <property type="term" value="P:translation"/>
    <property type="evidence" value="ECO:0007669"/>
    <property type="project" value="UniProtKB-UniRule"/>
</dbReference>
<dbReference type="CDD" id="cd00387">
    <property type="entry name" value="Ribosomal_L7_L12"/>
    <property type="match status" value="1"/>
</dbReference>
<dbReference type="FunFam" id="1.20.5.710:FF:000002">
    <property type="entry name" value="50S ribosomal protein L7/L12"/>
    <property type="match status" value="1"/>
</dbReference>
<dbReference type="FunFam" id="3.30.1390.10:FF:000001">
    <property type="entry name" value="50S ribosomal protein L7/L12"/>
    <property type="match status" value="1"/>
</dbReference>
<dbReference type="Gene3D" id="3.30.1390.10">
    <property type="match status" value="1"/>
</dbReference>
<dbReference type="Gene3D" id="1.20.5.710">
    <property type="entry name" value="Single helix bin"/>
    <property type="match status" value="1"/>
</dbReference>
<dbReference type="HAMAP" id="MF_00368">
    <property type="entry name" value="Ribosomal_bL12"/>
    <property type="match status" value="1"/>
</dbReference>
<dbReference type="InterPro" id="IPR000206">
    <property type="entry name" value="Ribosomal_bL12"/>
</dbReference>
<dbReference type="InterPro" id="IPR013823">
    <property type="entry name" value="Ribosomal_bL12_C"/>
</dbReference>
<dbReference type="InterPro" id="IPR014719">
    <property type="entry name" value="Ribosomal_bL12_C/ClpS-like"/>
</dbReference>
<dbReference type="InterPro" id="IPR008932">
    <property type="entry name" value="Ribosomal_bL12_oligo"/>
</dbReference>
<dbReference type="InterPro" id="IPR036235">
    <property type="entry name" value="Ribosomal_bL12_oligo_N_sf"/>
</dbReference>
<dbReference type="NCBIfam" id="TIGR00855">
    <property type="entry name" value="L12"/>
    <property type="match status" value="1"/>
</dbReference>
<dbReference type="PANTHER" id="PTHR45987">
    <property type="entry name" value="39S RIBOSOMAL PROTEIN L12"/>
    <property type="match status" value="1"/>
</dbReference>
<dbReference type="PANTHER" id="PTHR45987:SF4">
    <property type="entry name" value="LARGE RIBOSOMAL SUBUNIT PROTEIN BL12M"/>
    <property type="match status" value="1"/>
</dbReference>
<dbReference type="Pfam" id="PF00542">
    <property type="entry name" value="Ribosomal_L12"/>
    <property type="match status" value="1"/>
</dbReference>
<dbReference type="Pfam" id="PF16320">
    <property type="entry name" value="Ribosomal_L12_N"/>
    <property type="match status" value="1"/>
</dbReference>
<dbReference type="SUPFAM" id="SSF54736">
    <property type="entry name" value="ClpS-like"/>
    <property type="match status" value="1"/>
</dbReference>
<dbReference type="SUPFAM" id="SSF48300">
    <property type="entry name" value="Ribosomal protein L7/12, oligomerisation (N-terminal) domain"/>
    <property type="match status" value="1"/>
</dbReference>
<keyword id="KW-0687">Ribonucleoprotein</keyword>
<keyword id="KW-0689">Ribosomal protein</keyword>
<proteinExistence type="inferred from homology"/>
<accession>A4W1B6</accession>
<organism>
    <name type="scientific">Streptococcus suis (strain 98HAH33)</name>
    <dbReference type="NCBI Taxonomy" id="391296"/>
    <lineage>
        <taxon>Bacteria</taxon>
        <taxon>Bacillati</taxon>
        <taxon>Bacillota</taxon>
        <taxon>Bacilli</taxon>
        <taxon>Lactobacillales</taxon>
        <taxon>Streptococcaceae</taxon>
        <taxon>Streptococcus</taxon>
    </lineage>
</organism>
<protein>
    <recommendedName>
        <fullName evidence="1">Large ribosomal subunit protein bL12</fullName>
    </recommendedName>
    <alternativeName>
        <fullName evidence="2">50S ribosomal protein L7/L12</fullName>
    </alternativeName>
</protein>
<gene>
    <name evidence="1" type="primary">rplL</name>
    <name type="ordered locus">SSU98_0997</name>
</gene>
<reference key="1">
    <citation type="journal article" date="2007" name="PLoS ONE">
        <title>A glimpse of streptococcal toxic shock syndrome from comparative genomics of S. suis 2 Chinese isolates.</title>
        <authorList>
            <person name="Chen C."/>
            <person name="Tang J."/>
            <person name="Dong W."/>
            <person name="Wang C."/>
            <person name="Feng Y."/>
            <person name="Wang J."/>
            <person name="Zheng F."/>
            <person name="Pan X."/>
            <person name="Liu D."/>
            <person name="Li M."/>
            <person name="Song Y."/>
            <person name="Zhu X."/>
            <person name="Sun H."/>
            <person name="Feng T."/>
            <person name="Guo Z."/>
            <person name="Ju A."/>
            <person name="Ge J."/>
            <person name="Dong Y."/>
            <person name="Sun W."/>
            <person name="Jiang Y."/>
            <person name="Wang J."/>
            <person name="Yan J."/>
            <person name="Yang H."/>
            <person name="Wang X."/>
            <person name="Gao G.F."/>
            <person name="Yang R."/>
            <person name="Wang J."/>
            <person name="Yu J."/>
        </authorList>
    </citation>
    <scope>NUCLEOTIDE SEQUENCE [LARGE SCALE GENOMIC DNA]</scope>
    <source>
        <strain>98HAH33</strain>
    </source>
</reference>
<name>RL7_STRS2</name>
<comment type="function">
    <text evidence="1">Forms part of the ribosomal stalk which helps the ribosome interact with GTP-bound translation factors. Is thus essential for accurate translation.</text>
</comment>
<comment type="subunit">
    <text evidence="1">Homodimer. Part of the ribosomal stalk of the 50S ribosomal subunit. Forms a multimeric L10(L12)X complex, where L10 forms an elongated spine to which 2 to 4 L12 dimers bind in a sequential fashion. Binds GTP-bound translation factors.</text>
</comment>
<comment type="similarity">
    <text evidence="1">Belongs to the bacterial ribosomal protein bL12 family.</text>
</comment>
<evidence type="ECO:0000255" key="1">
    <source>
        <dbReference type="HAMAP-Rule" id="MF_00368"/>
    </source>
</evidence>
<evidence type="ECO:0000305" key="2"/>
<sequence length="121" mass="12417">MALNIENIIAEIKEATILELNDLVKAIEEEFGVTAAAPVAVAAAGGAAEEAKDSFDVELTSAGDKKVGVIKVVREITGLGLKEAKELVDGAPAMVKEGVATAEAEEIKAKLEEAGASVTLK</sequence>